<reference evidence="10" key="1">
    <citation type="journal article" date="2000" name="Antimicrob. Agents Chemother.">
        <title>A novel CTX-M beta-lactamase (CTX-M-8) in cefotaxime-resistant Enterobacteriaceae isolated in Brazil.</title>
        <authorList>
            <person name="Bonnet R."/>
            <person name="Sampaio J.L.M."/>
            <person name="Labia R."/>
            <person name="De Champs C."/>
            <person name="Sirot D."/>
            <person name="Chanal C."/>
            <person name="Sirot J."/>
        </authorList>
    </citation>
    <scope>NUCLEOTIDE SEQUENCE [GENOMIC DNA]</scope>
    <scope>FUNCTION</scope>
    <scope>CATALYTIC ACTIVITY</scope>
    <scope>ACTIVITY REGULATION</scope>
    <scope>BIOPHYSICOCHEMICAL PROPERTIES</scope>
    <source>
        <strain evidence="10">Rio-2</strain>
        <plasmid evidence="10">pRio-2</plasmid>
    </source>
</reference>
<reference evidence="8" key="2">
    <citation type="journal article" date="1991" name="Biochem. J.">
        <title>A standard numbering scheme for the class A beta-lactamases.</title>
        <authorList>
            <person name="Ambler R.P."/>
            <person name="Coulson A.F."/>
            <person name="Frere J.M."/>
            <person name="Ghuysen J.M."/>
            <person name="Joris B."/>
            <person name="Forsman M."/>
            <person name="Levesque R.C."/>
            <person name="Tiraby G."/>
            <person name="Waley S.G."/>
        </authorList>
    </citation>
    <scope>NOMENCLATURE</scope>
</reference>
<name>BLC8_CITAM</name>
<dbReference type="EC" id="3.5.2.6" evidence="5"/>
<dbReference type="EMBL" id="AF189721">
    <property type="protein sequence ID" value="AAF04388.1"/>
    <property type="molecule type" value="Genomic_DNA"/>
</dbReference>
<dbReference type="SMR" id="Q9RMT4"/>
<dbReference type="CARD" id="ARO:3001871">
    <property type="molecule name" value="CTX-M-8"/>
    <property type="mechanism identifier" value="ARO:0001004"/>
    <property type="mechanism name" value="antibiotic inactivation"/>
</dbReference>
<dbReference type="KEGG" id="ag:AAF04388"/>
<dbReference type="GO" id="GO:0005576">
    <property type="term" value="C:extracellular region"/>
    <property type="evidence" value="ECO:0007669"/>
    <property type="project" value="UniProtKB-SubCell"/>
</dbReference>
<dbReference type="GO" id="GO:0008800">
    <property type="term" value="F:beta-lactamase activity"/>
    <property type="evidence" value="ECO:0007669"/>
    <property type="project" value="UniProtKB-EC"/>
</dbReference>
<dbReference type="GO" id="GO:0030655">
    <property type="term" value="P:beta-lactam antibiotic catabolic process"/>
    <property type="evidence" value="ECO:0007669"/>
    <property type="project" value="InterPro"/>
</dbReference>
<dbReference type="GO" id="GO:0046677">
    <property type="term" value="P:response to antibiotic"/>
    <property type="evidence" value="ECO:0007669"/>
    <property type="project" value="UniProtKB-KW"/>
</dbReference>
<dbReference type="Gene3D" id="3.40.710.10">
    <property type="entry name" value="DD-peptidase/beta-lactamase superfamily"/>
    <property type="match status" value="1"/>
</dbReference>
<dbReference type="InterPro" id="IPR012338">
    <property type="entry name" value="Beta-lactam/transpept-like"/>
</dbReference>
<dbReference type="InterPro" id="IPR045155">
    <property type="entry name" value="Beta-lactam_cat"/>
</dbReference>
<dbReference type="InterPro" id="IPR000871">
    <property type="entry name" value="Beta-lactam_class-A"/>
</dbReference>
<dbReference type="InterPro" id="IPR023650">
    <property type="entry name" value="Beta-lactam_class-A_AS"/>
</dbReference>
<dbReference type="NCBIfam" id="NF033103">
    <property type="entry name" value="bla_class_A"/>
    <property type="match status" value="1"/>
</dbReference>
<dbReference type="NCBIfam" id="NF033089">
    <property type="entry name" value="blaCTX-M"/>
    <property type="match status" value="1"/>
</dbReference>
<dbReference type="PANTHER" id="PTHR35333">
    <property type="entry name" value="BETA-LACTAMASE"/>
    <property type="match status" value="1"/>
</dbReference>
<dbReference type="PANTHER" id="PTHR35333:SF3">
    <property type="entry name" value="BETA-LACTAMASE-TYPE TRANSPEPTIDASE FOLD CONTAINING PROTEIN"/>
    <property type="match status" value="1"/>
</dbReference>
<dbReference type="Pfam" id="PF13354">
    <property type="entry name" value="Beta-lactamase2"/>
    <property type="match status" value="1"/>
</dbReference>
<dbReference type="PRINTS" id="PR00118">
    <property type="entry name" value="BLACTAMASEA"/>
</dbReference>
<dbReference type="SUPFAM" id="SSF56601">
    <property type="entry name" value="beta-lactamase/transpeptidase-like"/>
    <property type="match status" value="1"/>
</dbReference>
<dbReference type="PROSITE" id="PS00146">
    <property type="entry name" value="BETA_LACTAMASE_A"/>
    <property type="match status" value="1"/>
</dbReference>
<accession>Q9RMT4</accession>
<gene>
    <name evidence="7" type="primary">bla</name>
    <name evidence="7 10" type="synonym">blaCTX-M-8</name>
</gene>
<evidence type="ECO:0000250" key="1">
    <source>
        <dbReference type="UniProtKB" id="A0A5R8T042"/>
    </source>
</evidence>
<evidence type="ECO:0000250" key="2">
    <source>
        <dbReference type="UniProtKB" id="P9WKD3"/>
    </source>
</evidence>
<evidence type="ECO:0000255" key="3"/>
<evidence type="ECO:0000255" key="4">
    <source>
        <dbReference type="PROSITE-ProRule" id="PRU10101"/>
    </source>
</evidence>
<evidence type="ECO:0000269" key="5">
    <source>
    </source>
</evidence>
<evidence type="ECO:0000269" key="6">
    <source>
    </source>
</evidence>
<evidence type="ECO:0000303" key="7">
    <source>
    </source>
</evidence>
<evidence type="ECO:0000305" key="8"/>
<evidence type="ECO:0000305" key="9">
    <source>
    </source>
</evidence>
<evidence type="ECO:0000312" key="10">
    <source>
        <dbReference type="EMBL" id="AAF04388.1"/>
    </source>
</evidence>
<geneLocation type="plasmid" evidence="10">
    <name>pRio-2</name>
</geneLocation>
<proteinExistence type="evidence at protein level"/>
<organism evidence="10">
    <name type="scientific">Citrobacter amalonaticus</name>
    <dbReference type="NCBI Taxonomy" id="35703"/>
    <lineage>
        <taxon>Bacteria</taxon>
        <taxon>Pseudomonadati</taxon>
        <taxon>Pseudomonadota</taxon>
        <taxon>Gammaproteobacteria</taxon>
        <taxon>Enterobacterales</taxon>
        <taxon>Enterobacteriaceae</taxon>
        <taxon>Citrobacter</taxon>
    </lineage>
</organism>
<comment type="function">
    <text evidence="5">Extended-spectrum beta-lactamase (ESBL) which confers resistance to penicillins, as well as first, third and fourth-generation cephalosporins (PubMed:10858358). Has cefotaxime-hydrolyzing activity (PubMed:10858358). Inactive against cephalosporin antibiotic, cefoxitin, and the carbapenem, imipenem (PubMed:10858358).</text>
</comment>
<comment type="catalytic activity">
    <reaction evidence="5">
        <text>a beta-lactam + H2O = a substituted beta-amino acid</text>
        <dbReference type="Rhea" id="RHEA:20401"/>
        <dbReference type="ChEBI" id="CHEBI:15377"/>
        <dbReference type="ChEBI" id="CHEBI:35627"/>
        <dbReference type="ChEBI" id="CHEBI:140347"/>
        <dbReference type="EC" id="3.5.2.6"/>
    </reaction>
</comment>
<comment type="activity regulation">
    <text evidence="5">Inhibited by the beta-lactamase-blocking agents clavulanic acid, tazobactam and sulbactam; in the DH5alpha strain of E.coli.</text>
</comment>
<comment type="biophysicochemical properties">
    <kinetics>
        <KM evidence="5">11 uM for benzylpenicillin</KM>
        <KM evidence="5">12 uM for amoxicillin</KM>
        <KM evidence="5">14 uM for ticarcillin</KM>
        <KM evidence="5">19 uM for piperacillin</KM>
        <KM evidence="5">87 uM for cephalothin</KM>
        <KM evidence="5">12 uM for cefuroxime</KM>
        <KM evidence="5">74 uM for cefotaxime</KM>
        <KM evidence="5">1200 uM for cefpirome</KM>
        <KM evidence="5">990 uM for cefepime</KM>
        <KM evidence="5">800 uM for aztreonam</KM>
        <KM evidence="5">500 uM for ceftazidime</KM>
        <text evidence="5">Value for ceftazidime was determined as Ki by substrate competition with benzylpenicillin.</text>
    </kinetics>
</comment>
<comment type="subunit">
    <text evidence="2">Monomer.</text>
</comment>
<comment type="subcellular location">
    <subcellularLocation>
        <location evidence="1">Secreted</location>
    </subcellularLocation>
</comment>
<comment type="miscellaneous">
    <text evidence="6">The class A beta-lactamase family has a specific amino-acid numbering system, sometimes called Ambler or ABL numbering and often misspelt as Amber (PubMed:2039479). A multiple sequence alignment was used to derive a consensus sequence and then the consensus was numbered taking into account insertions and deletions (PubMed:2039479). This allows use of identical numbers, e.g. for active site residues, despite differences in protein length (PubMed:2039479). UniProt always uses natural numbering of residues, hence there appear to be differences in numbering between this entry and some papers (PubMed:2039479).</text>
</comment>
<comment type="similarity">
    <text evidence="8">Belongs to the class-A beta-lactamase family.</text>
</comment>
<protein>
    <recommendedName>
        <fullName evidence="7">Beta-lactamase CTX-M-8</fullName>
        <ecNumber evidence="5">3.5.2.6</ecNumber>
    </recommendedName>
    <alternativeName>
        <fullName evidence="9">Cefotaximase 8</fullName>
    </alternativeName>
</protein>
<feature type="signal peptide" evidence="3">
    <location>
        <begin position="1"/>
        <end position="30"/>
    </location>
</feature>
<feature type="chain" id="PRO_5004333085" description="Beta-lactamase CTX-M-8" evidence="3">
    <location>
        <begin position="31"/>
        <end position="291"/>
    </location>
</feature>
<feature type="active site" description="Nucleophile; acyl-ester intermediate" evidence="1 4">
    <location>
        <position position="73"/>
    </location>
</feature>
<feature type="binding site" evidence="1">
    <location>
        <position position="76"/>
    </location>
    <ligand>
        <name>a beta-lactam</name>
        <dbReference type="ChEBI" id="CHEBI:35627"/>
    </ligand>
</feature>
<feature type="binding site" evidence="1">
    <location>
        <position position="133"/>
    </location>
    <ligand>
        <name>a beta-lactam</name>
        <dbReference type="ChEBI" id="CHEBI:35627"/>
    </ligand>
</feature>
<feature type="binding site" evidence="1">
    <location>
        <position position="169"/>
    </location>
    <ligand>
        <name>a beta-lactam</name>
        <dbReference type="ChEBI" id="CHEBI:35627"/>
    </ligand>
</feature>
<feature type="binding site" evidence="1">
    <location>
        <position position="240"/>
    </location>
    <ligand>
        <name>a beta-lactam</name>
        <dbReference type="ChEBI" id="CHEBI:35627"/>
    </ligand>
</feature>
<keyword id="KW-0046">Antibiotic resistance</keyword>
<keyword id="KW-0378">Hydrolase</keyword>
<keyword id="KW-0614">Plasmid</keyword>
<keyword id="KW-0964">Secreted</keyword>
<keyword id="KW-0732">Signal</keyword>
<sequence length="291" mass="31217">MMRHRVKRMMLMTTACISLLLGSAPLYAQANDVQQKLAALEKSSGGRLGVALIDTADNAQTLYRADERFAMCSTSKVMAAAAVLKQSETQKKVLSQKVEIKSSDLINYNPITEKHVNGTMTLAELSAAALQYSDNTAMNKLIAHLGGPDKVTAFARAIGDNTFRLDRTEPTLNTAIPGDPRDTTTPLAMAQTLRNLTLGSALGETQRAQLVTWLKGNTTGAASIQAGLPTSWVVGDKTGSGDYGTTNDIAVIWPEGRAPLILVTYFTQPEQKAESRRDVLAAAAKIVTDGY</sequence>